<feature type="chain" id="PRO_0000320870" description="Protein translocase subunit SecA">
    <location>
        <begin position="1"/>
        <end position="903"/>
    </location>
</feature>
<feature type="region of interest" description="Disordered" evidence="2">
    <location>
        <begin position="854"/>
        <end position="893"/>
    </location>
</feature>
<feature type="compositionally biased region" description="Polar residues" evidence="2">
    <location>
        <begin position="856"/>
        <end position="869"/>
    </location>
</feature>
<feature type="compositionally biased region" description="Basic and acidic residues" evidence="2">
    <location>
        <begin position="874"/>
        <end position="883"/>
    </location>
</feature>
<feature type="binding site" evidence="1">
    <location>
        <position position="87"/>
    </location>
    <ligand>
        <name>ATP</name>
        <dbReference type="ChEBI" id="CHEBI:30616"/>
    </ligand>
</feature>
<feature type="binding site" evidence="1">
    <location>
        <begin position="105"/>
        <end position="109"/>
    </location>
    <ligand>
        <name>ATP</name>
        <dbReference type="ChEBI" id="CHEBI:30616"/>
    </ligand>
</feature>
<feature type="binding site" evidence="1">
    <location>
        <position position="507"/>
    </location>
    <ligand>
        <name>ATP</name>
        <dbReference type="ChEBI" id="CHEBI:30616"/>
    </ligand>
</feature>
<feature type="binding site" evidence="1">
    <location>
        <position position="887"/>
    </location>
    <ligand>
        <name>Zn(2+)</name>
        <dbReference type="ChEBI" id="CHEBI:29105"/>
    </ligand>
</feature>
<feature type="binding site" evidence="1">
    <location>
        <position position="889"/>
    </location>
    <ligand>
        <name>Zn(2+)</name>
        <dbReference type="ChEBI" id="CHEBI:29105"/>
    </ligand>
</feature>
<feature type="binding site" evidence="1">
    <location>
        <position position="898"/>
    </location>
    <ligand>
        <name>Zn(2+)</name>
        <dbReference type="ChEBI" id="CHEBI:29105"/>
    </ligand>
</feature>
<feature type="binding site" evidence="1">
    <location>
        <position position="899"/>
    </location>
    <ligand>
        <name>Zn(2+)</name>
        <dbReference type="ChEBI" id="CHEBI:29105"/>
    </ligand>
</feature>
<dbReference type="EC" id="7.4.2.8" evidence="1"/>
<dbReference type="EMBL" id="CP000127">
    <property type="protein sequence ID" value="ABA59297.1"/>
    <property type="molecule type" value="Genomic_DNA"/>
</dbReference>
<dbReference type="RefSeq" id="WP_002813303.1">
    <property type="nucleotide sequence ID" value="NC_007484.1"/>
</dbReference>
<dbReference type="SMR" id="Q3J799"/>
<dbReference type="FunCoup" id="Q3J799">
    <property type="interactions" value="604"/>
</dbReference>
<dbReference type="STRING" id="323261.Noc_2851"/>
<dbReference type="KEGG" id="noc:Noc_2851"/>
<dbReference type="eggNOG" id="COG0653">
    <property type="taxonomic scope" value="Bacteria"/>
</dbReference>
<dbReference type="HOGENOM" id="CLU_005314_3_0_6"/>
<dbReference type="InParanoid" id="Q3J799"/>
<dbReference type="Proteomes" id="UP000006838">
    <property type="component" value="Chromosome"/>
</dbReference>
<dbReference type="GO" id="GO:0031522">
    <property type="term" value="C:cell envelope Sec protein transport complex"/>
    <property type="evidence" value="ECO:0007669"/>
    <property type="project" value="TreeGrafter"/>
</dbReference>
<dbReference type="GO" id="GO:0005829">
    <property type="term" value="C:cytosol"/>
    <property type="evidence" value="ECO:0007669"/>
    <property type="project" value="TreeGrafter"/>
</dbReference>
<dbReference type="GO" id="GO:0005886">
    <property type="term" value="C:plasma membrane"/>
    <property type="evidence" value="ECO:0007669"/>
    <property type="project" value="UniProtKB-SubCell"/>
</dbReference>
<dbReference type="GO" id="GO:0005524">
    <property type="term" value="F:ATP binding"/>
    <property type="evidence" value="ECO:0007669"/>
    <property type="project" value="UniProtKB-UniRule"/>
</dbReference>
<dbReference type="GO" id="GO:0046872">
    <property type="term" value="F:metal ion binding"/>
    <property type="evidence" value="ECO:0007669"/>
    <property type="project" value="UniProtKB-KW"/>
</dbReference>
<dbReference type="GO" id="GO:0008564">
    <property type="term" value="F:protein-exporting ATPase activity"/>
    <property type="evidence" value="ECO:0007669"/>
    <property type="project" value="UniProtKB-EC"/>
</dbReference>
<dbReference type="GO" id="GO:0065002">
    <property type="term" value="P:intracellular protein transmembrane transport"/>
    <property type="evidence" value="ECO:0007669"/>
    <property type="project" value="UniProtKB-UniRule"/>
</dbReference>
<dbReference type="GO" id="GO:0017038">
    <property type="term" value="P:protein import"/>
    <property type="evidence" value="ECO:0007669"/>
    <property type="project" value="InterPro"/>
</dbReference>
<dbReference type="GO" id="GO:0006605">
    <property type="term" value="P:protein targeting"/>
    <property type="evidence" value="ECO:0007669"/>
    <property type="project" value="UniProtKB-UniRule"/>
</dbReference>
<dbReference type="GO" id="GO:0043952">
    <property type="term" value="P:protein transport by the Sec complex"/>
    <property type="evidence" value="ECO:0007669"/>
    <property type="project" value="TreeGrafter"/>
</dbReference>
<dbReference type="CDD" id="cd17928">
    <property type="entry name" value="DEXDc_SecA"/>
    <property type="match status" value="1"/>
</dbReference>
<dbReference type="CDD" id="cd18803">
    <property type="entry name" value="SF2_C_secA"/>
    <property type="match status" value="1"/>
</dbReference>
<dbReference type="FunFam" id="3.40.50.300:FF:000113">
    <property type="entry name" value="Preprotein translocase subunit SecA"/>
    <property type="match status" value="1"/>
</dbReference>
<dbReference type="FunFam" id="3.90.1440.10:FF:000001">
    <property type="entry name" value="Preprotein translocase subunit SecA"/>
    <property type="match status" value="1"/>
</dbReference>
<dbReference type="FunFam" id="1.10.3060.10:FF:000003">
    <property type="entry name" value="Protein translocase subunit SecA"/>
    <property type="match status" value="1"/>
</dbReference>
<dbReference type="FunFam" id="3.40.50.300:FF:000334">
    <property type="entry name" value="Protein translocase subunit SecA"/>
    <property type="match status" value="1"/>
</dbReference>
<dbReference type="Gene3D" id="1.10.3060.10">
    <property type="entry name" value="Helical scaffold and wing domains of SecA"/>
    <property type="match status" value="1"/>
</dbReference>
<dbReference type="Gene3D" id="3.40.50.300">
    <property type="entry name" value="P-loop containing nucleotide triphosphate hydrolases"/>
    <property type="match status" value="2"/>
</dbReference>
<dbReference type="Gene3D" id="3.90.1440.10">
    <property type="entry name" value="SecA, preprotein cross-linking domain"/>
    <property type="match status" value="1"/>
</dbReference>
<dbReference type="HAMAP" id="MF_01382">
    <property type="entry name" value="SecA"/>
    <property type="match status" value="1"/>
</dbReference>
<dbReference type="InterPro" id="IPR014001">
    <property type="entry name" value="Helicase_ATP-bd"/>
</dbReference>
<dbReference type="InterPro" id="IPR001650">
    <property type="entry name" value="Helicase_C-like"/>
</dbReference>
<dbReference type="InterPro" id="IPR027417">
    <property type="entry name" value="P-loop_NTPase"/>
</dbReference>
<dbReference type="InterPro" id="IPR004027">
    <property type="entry name" value="SEC_C_motif"/>
</dbReference>
<dbReference type="InterPro" id="IPR000185">
    <property type="entry name" value="SecA"/>
</dbReference>
<dbReference type="InterPro" id="IPR020937">
    <property type="entry name" value="SecA_CS"/>
</dbReference>
<dbReference type="InterPro" id="IPR011115">
    <property type="entry name" value="SecA_DEAD"/>
</dbReference>
<dbReference type="InterPro" id="IPR014018">
    <property type="entry name" value="SecA_motor_DEAD"/>
</dbReference>
<dbReference type="InterPro" id="IPR011130">
    <property type="entry name" value="SecA_preprotein_X-link_dom"/>
</dbReference>
<dbReference type="InterPro" id="IPR044722">
    <property type="entry name" value="SecA_SF2_C"/>
</dbReference>
<dbReference type="InterPro" id="IPR011116">
    <property type="entry name" value="SecA_Wing/Scaffold"/>
</dbReference>
<dbReference type="InterPro" id="IPR036266">
    <property type="entry name" value="SecA_Wing/Scaffold_sf"/>
</dbReference>
<dbReference type="InterPro" id="IPR036670">
    <property type="entry name" value="SecA_X-link_sf"/>
</dbReference>
<dbReference type="NCBIfam" id="NF009538">
    <property type="entry name" value="PRK12904.1"/>
    <property type="match status" value="1"/>
</dbReference>
<dbReference type="NCBIfam" id="TIGR00963">
    <property type="entry name" value="secA"/>
    <property type="match status" value="1"/>
</dbReference>
<dbReference type="PANTHER" id="PTHR30612:SF0">
    <property type="entry name" value="CHLOROPLAST PROTEIN-TRANSPORTING ATPASE"/>
    <property type="match status" value="1"/>
</dbReference>
<dbReference type="PANTHER" id="PTHR30612">
    <property type="entry name" value="SECA INNER MEMBRANE COMPONENT OF SEC PROTEIN SECRETION SYSTEM"/>
    <property type="match status" value="1"/>
</dbReference>
<dbReference type="Pfam" id="PF21090">
    <property type="entry name" value="P-loop_SecA"/>
    <property type="match status" value="1"/>
</dbReference>
<dbReference type="Pfam" id="PF02810">
    <property type="entry name" value="SEC-C"/>
    <property type="match status" value="1"/>
</dbReference>
<dbReference type="Pfam" id="PF07517">
    <property type="entry name" value="SecA_DEAD"/>
    <property type="match status" value="1"/>
</dbReference>
<dbReference type="Pfam" id="PF01043">
    <property type="entry name" value="SecA_PP_bind"/>
    <property type="match status" value="1"/>
</dbReference>
<dbReference type="Pfam" id="PF07516">
    <property type="entry name" value="SecA_SW"/>
    <property type="match status" value="1"/>
</dbReference>
<dbReference type="PRINTS" id="PR00906">
    <property type="entry name" value="SECA"/>
</dbReference>
<dbReference type="SMART" id="SM00957">
    <property type="entry name" value="SecA_DEAD"/>
    <property type="match status" value="1"/>
</dbReference>
<dbReference type="SMART" id="SM00958">
    <property type="entry name" value="SecA_PP_bind"/>
    <property type="match status" value="1"/>
</dbReference>
<dbReference type="SUPFAM" id="SSF81886">
    <property type="entry name" value="Helical scaffold and wing domains of SecA"/>
    <property type="match status" value="1"/>
</dbReference>
<dbReference type="SUPFAM" id="SSF52540">
    <property type="entry name" value="P-loop containing nucleoside triphosphate hydrolases"/>
    <property type="match status" value="2"/>
</dbReference>
<dbReference type="SUPFAM" id="SSF81767">
    <property type="entry name" value="Pre-protein crosslinking domain of SecA"/>
    <property type="match status" value="1"/>
</dbReference>
<dbReference type="PROSITE" id="PS01312">
    <property type="entry name" value="SECA"/>
    <property type="match status" value="1"/>
</dbReference>
<dbReference type="PROSITE" id="PS51196">
    <property type="entry name" value="SECA_MOTOR_DEAD"/>
    <property type="match status" value="1"/>
</dbReference>
<comment type="function">
    <text evidence="1">Part of the Sec protein translocase complex. Interacts with the SecYEG preprotein conducting channel. Has a central role in coupling the hydrolysis of ATP to the transfer of proteins into and across the cell membrane, serving both as a receptor for the preprotein-SecB complex and as an ATP-driven molecular motor driving the stepwise translocation of polypeptide chains across the membrane.</text>
</comment>
<comment type="catalytic activity">
    <reaction evidence="1">
        <text>ATP + H2O + cellular proteinSide 1 = ADP + phosphate + cellular proteinSide 2.</text>
        <dbReference type="EC" id="7.4.2.8"/>
    </reaction>
</comment>
<comment type="cofactor">
    <cofactor evidence="1">
        <name>Zn(2+)</name>
        <dbReference type="ChEBI" id="CHEBI:29105"/>
    </cofactor>
    <text evidence="1">May bind 1 zinc ion per subunit.</text>
</comment>
<comment type="subunit">
    <text evidence="1">Monomer and homodimer. Part of the essential Sec protein translocation apparatus which comprises SecA, SecYEG and auxiliary proteins SecDF-YajC and YidC.</text>
</comment>
<comment type="subcellular location">
    <subcellularLocation>
        <location evidence="1">Cell inner membrane</location>
        <topology evidence="1">Peripheral membrane protein</topology>
        <orientation evidence="1">Cytoplasmic side</orientation>
    </subcellularLocation>
    <subcellularLocation>
        <location evidence="1">Cytoplasm</location>
    </subcellularLocation>
    <text evidence="1">Distribution is 50-50.</text>
</comment>
<comment type="similarity">
    <text evidence="1">Belongs to the SecA family.</text>
</comment>
<gene>
    <name evidence="1" type="primary">secA</name>
    <name type="ordered locus">Noc_2851</name>
</gene>
<evidence type="ECO:0000255" key="1">
    <source>
        <dbReference type="HAMAP-Rule" id="MF_01382"/>
    </source>
</evidence>
<evidence type="ECO:0000256" key="2">
    <source>
        <dbReference type="SAM" id="MobiDB-lite"/>
    </source>
</evidence>
<accession>Q3J799</accession>
<keyword id="KW-0067">ATP-binding</keyword>
<keyword id="KW-0997">Cell inner membrane</keyword>
<keyword id="KW-1003">Cell membrane</keyword>
<keyword id="KW-0963">Cytoplasm</keyword>
<keyword id="KW-0472">Membrane</keyword>
<keyword id="KW-0479">Metal-binding</keyword>
<keyword id="KW-0547">Nucleotide-binding</keyword>
<keyword id="KW-0653">Protein transport</keyword>
<keyword id="KW-1185">Reference proteome</keyword>
<keyword id="KW-1278">Translocase</keyword>
<keyword id="KW-0811">Translocation</keyword>
<keyword id="KW-0813">Transport</keyword>
<keyword id="KW-0862">Zinc</keyword>
<reference key="1">
    <citation type="journal article" date="2006" name="Appl. Environ. Microbiol.">
        <title>Complete genome sequence of the marine, chemolithoautotrophic, ammonia-oxidizing bacterium Nitrosococcus oceani ATCC 19707.</title>
        <authorList>
            <person name="Klotz M.G."/>
            <person name="Arp D.J."/>
            <person name="Chain P.S.G."/>
            <person name="El-Sheikh A.F."/>
            <person name="Hauser L.J."/>
            <person name="Hommes N.G."/>
            <person name="Larimer F.W."/>
            <person name="Malfatti S.A."/>
            <person name="Norton J.M."/>
            <person name="Poret-Peterson A.T."/>
            <person name="Vergez L.M."/>
            <person name="Ward B.B."/>
        </authorList>
    </citation>
    <scope>NUCLEOTIDE SEQUENCE [LARGE SCALE GENOMIC DNA]</scope>
    <source>
        <strain>ATCC 19707 / BCRC 17464 / JCM 30415 / NCIMB 11848 / C-107</strain>
    </source>
</reference>
<protein>
    <recommendedName>
        <fullName evidence="1">Protein translocase subunit SecA</fullName>
        <ecNumber evidence="1">7.4.2.8</ecNumber>
    </recommendedName>
</protein>
<name>SECA_NITOC</name>
<organism>
    <name type="scientific">Nitrosococcus oceani (strain ATCC 19707 / BCRC 17464 / JCM 30415 / NCIMB 11848 / C-107)</name>
    <dbReference type="NCBI Taxonomy" id="323261"/>
    <lineage>
        <taxon>Bacteria</taxon>
        <taxon>Pseudomonadati</taxon>
        <taxon>Pseudomonadota</taxon>
        <taxon>Gammaproteobacteria</taxon>
        <taxon>Chromatiales</taxon>
        <taxon>Chromatiaceae</taxon>
        <taxon>Nitrosococcus</taxon>
    </lineage>
</organism>
<sequence length="903" mass="101166">MVTNLLSKVFGSRNDRLLRSVNKVVAQINALEQEFAALSDGQLQAKTDQFRDRLAADESLDELIPEAFAVVREAGKRVLGMRHFDVQLLGGIVLHDGKIAEMRTGEGKTLVATAAAYLNALPGKGVHVVTVNDYLAQRDAQWMGPLYQFLGLSTGIIASNMDPGARKAAYMADITYGTNNEFGFDYLRDNMAFSLEEKVQRELHYAIVDEVDSILIDEARTPLIISGAAEQSSELYRQINVFMPRLKKQEREDGPGDYTVDEKARQVYLTEAGHEHAEQVMLESGLMQEGESLYDAANIGLMHHFNAALRAHVLFHKDVDYIVKDDQVVIVDEFTGRTMPGRRWSEGLHQAVEAKEGVSIQSENQTLASITFQNYFRLYEKLAGMTGTADTEAYEFQQIYGLEVVVIPTHLPMVRVDHGDQVYLTAEEKYQAIIEDIKDCHTRGQPVLVGTASIETSEHLSGLLKKEKVEHRVLNAKFHEKEAEIIAQAGRPGTVTIATNMAGRGTDIVLGGSLDAELATLGENADKAKKEEIRRRWQEGHDQVVAAGGLHIIGTERHESRRIDNQLRGRSGRQGDPGSTRFYLSLEDNLMRIFASERISGLMQRLGMEEGEAIEHPWVTRAIENAQRKVEGHNFDIRKQLLEFDDVANDQRTVIYQQRNELMAAEDVSDMVQSIRQGVIHSLVSQYIPPGSIDEQWDIPGLQEGLASEFGLEVDIAGWLEADEGLHEETLRERIMEAMEGAYGEKETLVGPQVMRHFEKAAMLQVLDSQWKEHLAMMDHLRQGIHLRGYAQKNPKQEFKREAFELFQEMLERIKHDVIALLSKVQVRTEADVEAVEHQRRAASAVEYQHAAASTMADSSGDVKSSTAESKAPYVRDGRKVGRNEPCPCGSGKKYKHCHGKLN</sequence>
<proteinExistence type="inferred from homology"/>